<keyword id="KW-0007">Acetylation</keyword>
<keyword id="KW-0025">Alternative splicing</keyword>
<keyword id="KW-0963">Cytoplasm</keyword>
<keyword id="KW-0378">Hydrolase</keyword>
<keyword id="KW-0866">Nonsense-mediated mRNA decay</keyword>
<keyword id="KW-0539">Nucleus</keyword>
<keyword id="KW-0597">Phosphoprotein</keyword>
<keyword id="KW-1267">Proteomics identification</keyword>
<keyword id="KW-1185">Reference proteome</keyword>
<protein>
    <recommendedName>
        <fullName>mRNA-decapping enzyme 1B</fullName>
        <ecNumber evidence="1">3.6.1.62</ecNumber>
    </recommendedName>
</protein>
<reference key="1">
    <citation type="journal article" date="2002" name="Mol. Cell. Biol.">
        <title>Identification of a human decapping complex associated with hUpf proteins in nonsense-mediated decay.</title>
        <authorList>
            <person name="Lykke-Andersen J."/>
        </authorList>
    </citation>
    <scope>NUCLEOTIDE SEQUENCE [MRNA] (ISOFORM 1)</scope>
    <scope>INTERACTION WITH DCP1A</scope>
</reference>
<reference key="2">
    <citation type="journal article" date="2004" name="Nat. Genet.">
        <title>Complete sequencing and characterization of 21,243 full-length human cDNAs.</title>
        <authorList>
            <person name="Ota T."/>
            <person name="Suzuki Y."/>
            <person name="Nishikawa T."/>
            <person name="Otsuki T."/>
            <person name="Sugiyama T."/>
            <person name="Irie R."/>
            <person name="Wakamatsu A."/>
            <person name="Hayashi K."/>
            <person name="Sato H."/>
            <person name="Nagai K."/>
            <person name="Kimura K."/>
            <person name="Makita H."/>
            <person name="Sekine M."/>
            <person name="Obayashi M."/>
            <person name="Nishi T."/>
            <person name="Shibahara T."/>
            <person name="Tanaka T."/>
            <person name="Ishii S."/>
            <person name="Yamamoto J."/>
            <person name="Saito K."/>
            <person name="Kawai Y."/>
            <person name="Isono Y."/>
            <person name="Nakamura Y."/>
            <person name="Nagahari K."/>
            <person name="Murakami K."/>
            <person name="Yasuda T."/>
            <person name="Iwayanagi T."/>
            <person name="Wagatsuma M."/>
            <person name="Shiratori A."/>
            <person name="Sudo H."/>
            <person name="Hosoiri T."/>
            <person name="Kaku Y."/>
            <person name="Kodaira H."/>
            <person name="Kondo H."/>
            <person name="Sugawara M."/>
            <person name="Takahashi M."/>
            <person name="Kanda K."/>
            <person name="Yokoi T."/>
            <person name="Furuya T."/>
            <person name="Kikkawa E."/>
            <person name="Omura Y."/>
            <person name="Abe K."/>
            <person name="Kamihara K."/>
            <person name="Katsuta N."/>
            <person name="Sato K."/>
            <person name="Tanikawa M."/>
            <person name="Yamazaki M."/>
            <person name="Ninomiya K."/>
            <person name="Ishibashi T."/>
            <person name="Yamashita H."/>
            <person name="Murakawa K."/>
            <person name="Fujimori K."/>
            <person name="Tanai H."/>
            <person name="Kimata M."/>
            <person name="Watanabe M."/>
            <person name="Hiraoka S."/>
            <person name="Chiba Y."/>
            <person name="Ishida S."/>
            <person name="Ono Y."/>
            <person name="Takiguchi S."/>
            <person name="Watanabe S."/>
            <person name="Yosida M."/>
            <person name="Hotuta T."/>
            <person name="Kusano J."/>
            <person name="Kanehori K."/>
            <person name="Takahashi-Fujii A."/>
            <person name="Hara H."/>
            <person name="Tanase T.-O."/>
            <person name="Nomura Y."/>
            <person name="Togiya S."/>
            <person name="Komai F."/>
            <person name="Hara R."/>
            <person name="Takeuchi K."/>
            <person name="Arita M."/>
            <person name="Imose N."/>
            <person name="Musashino K."/>
            <person name="Yuuki H."/>
            <person name="Oshima A."/>
            <person name="Sasaki N."/>
            <person name="Aotsuka S."/>
            <person name="Yoshikawa Y."/>
            <person name="Matsunawa H."/>
            <person name="Ichihara T."/>
            <person name="Shiohata N."/>
            <person name="Sano S."/>
            <person name="Moriya S."/>
            <person name="Momiyama H."/>
            <person name="Satoh N."/>
            <person name="Takami S."/>
            <person name="Terashima Y."/>
            <person name="Suzuki O."/>
            <person name="Nakagawa S."/>
            <person name="Senoh A."/>
            <person name="Mizoguchi H."/>
            <person name="Goto Y."/>
            <person name="Shimizu F."/>
            <person name="Wakebe H."/>
            <person name="Hishigaki H."/>
            <person name="Watanabe T."/>
            <person name="Sugiyama A."/>
            <person name="Takemoto M."/>
            <person name="Kawakami B."/>
            <person name="Yamazaki M."/>
            <person name="Watanabe K."/>
            <person name="Kumagai A."/>
            <person name="Itakura S."/>
            <person name="Fukuzumi Y."/>
            <person name="Fujimori Y."/>
            <person name="Komiyama M."/>
            <person name="Tashiro H."/>
            <person name="Tanigami A."/>
            <person name="Fujiwara T."/>
            <person name="Ono T."/>
            <person name="Yamada K."/>
            <person name="Fujii Y."/>
            <person name="Ozaki K."/>
            <person name="Hirao M."/>
            <person name="Ohmori Y."/>
            <person name="Kawabata A."/>
            <person name="Hikiji T."/>
            <person name="Kobatake N."/>
            <person name="Inagaki H."/>
            <person name="Ikema Y."/>
            <person name="Okamoto S."/>
            <person name="Okitani R."/>
            <person name="Kawakami T."/>
            <person name="Noguchi S."/>
            <person name="Itoh T."/>
            <person name="Shigeta K."/>
            <person name="Senba T."/>
            <person name="Matsumura K."/>
            <person name="Nakajima Y."/>
            <person name="Mizuno T."/>
            <person name="Morinaga M."/>
            <person name="Sasaki M."/>
            <person name="Togashi T."/>
            <person name="Oyama M."/>
            <person name="Hata H."/>
            <person name="Watanabe M."/>
            <person name="Komatsu T."/>
            <person name="Mizushima-Sugano J."/>
            <person name="Satoh T."/>
            <person name="Shirai Y."/>
            <person name="Takahashi Y."/>
            <person name="Nakagawa K."/>
            <person name="Okumura K."/>
            <person name="Nagase T."/>
            <person name="Nomura N."/>
            <person name="Kikuchi H."/>
            <person name="Masuho Y."/>
            <person name="Yamashita R."/>
            <person name="Nakai K."/>
            <person name="Yada T."/>
            <person name="Nakamura Y."/>
            <person name="Ohara O."/>
            <person name="Isogai T."/>
            <person name="Sugano S."/>
        </authorList>
    </citation>
    <scope>NUCLEOTIDE SEQUENCE [LARGE SCALE MRNA] (ISOFORMS 1 AND 2)</scope>
    <source>
        <tissue>Teratocarcinoma</tissue>
    </source>
</reference>
<reference key="3">
    <citation type="journal article" date="2006" name="Nature">
        <title>The finished DNA sequence of human chromosome 12.</title>
        <authorList>
            <person name="Scherer S.E."/>
            <person name="Muzny D.M."/>
            <person name="Buhay C.J."/>
            <person name="Chen R."/>
            <person name="Cree A."/>
            <person name="Ding Y."/>
            <person name="Dugan-Rocha S."/>
            <person name="Gill R."/>
            <person name="Gunaratne P."/>
            <person name="Harris R.A."/>
            <person name="Hawes A.C."/>
            <person name="Hernandez J."/>
            <person name="Hodgson A.V."/>
            <person name="Hume J."/>
            <person name="Jackson A."/>
            <person name="Khan Z.M."/>
            <person name="Kovar-Smith C."/>
            <person name="Lewis L.R."/>
            <person name="Lozado R.J."/>
            <person name="Metzker M.L."/>
            <person name="Milosavljevic A."/>
            <person name="Miner G.R."/>
            <person name="Montgomery K.T."/>
            <person name="Morgan M.B."/>
            <person name="Nazareth L.V."/>
            <person name="Scott G."/>
            <person name="Sodergren E."/>
            <person name="Song X.-Z."/>
            <person name="Steffen D."/>
            <person name="Lovering R.C."/>
            <person name="Wheeler D.A."/>
            <person name="Worley K.C."/>
            <person name="Yuan Y."/>
            <person name="Zhang Z."/>
            <person name="Adams C.Q."/>
            <person name="Ansari-Lari M.A."/>
            <person name="Ayele M."/>
            <person name="Brown M.J."/>
            <person name="Chen G."/>
            <person name="Chen Z."/>
            <person name="Clerc-Blankenburg K.P."/>
            <person name="Davis C."/>
            <person name="Delgado O."/>
            <person name="Dinh H.H."/>
            <person name="Draper H."/>
            <person name="Gonzalez-Garay M.L."/>
            <person name="Havlak P."/>
            <person name="Jackson L.R."/>
            <person name="Jacob L.S."/>
            <person name="Kelly S.H."/>
            <person name="Li L."/>
            <person name="Li Z."/>
            <person name="Liu J."/>
            <person name="Liu W."/>
            <person name="Lu J."/>
            <person name="Maheshwari M."/>
            <person name="Nguyen B.-V."/>
            <person name="Okwuonu G.O."/>
            <person name="Pasternak S."/>
            <person name="Perez L.M."/>
            <person name="Plopper F.J.H."/>
            <person name="Santibanez J."/>
            <person name="Shen H."/>
            <person name="Tabor P.E."/>
            <person name="Verduzco D."/>
            <person name="Waldron L."/>
            <person name="Wang Q."/>
            <person name="Williams G.A."/>
            <person name="Zhang J."/>
            <person name="Zhou J."/>
            <person name="Allen C.C."/>
            <person name="Amin A.G."/>
            <person name="Anyalebechi V."/>
            <person name="Bailey M."/>
            <person name="Barbaria J.A."/>
            <person name="Bimage K.E."/>
            <person name="Bryant N.P."/>
            <person name="Burch P.E."/>
            <person name="Burkett C.E."/>
            <person name="Burrell K.L."/>
            <person name="Calderon E."/>
            <person name="Cardenas V."/>
            <person name="Carter K."/>
            <person name="Casias K."/>
            <person name="Cavazos I."/>
            <person name="Cavazos S.R."/>
            <person name="Ceasar H."/>
            <person name="Chacko J."/>
            <person name="Chan S.N."/>
            <person name="Chavez D."/>
            <person name="Christopoulos C."/>
            <person name="Chu J."/>
            <person name="Cockrell R."/>
            <person name="Cox C.D."/>
            <person name="Dang M."/>
            <person name="Dathorne S.R."/>
            <person name="David R."/>
            <person name="Davis C.M."/>
            <person name="Davy-Carroll L."/>
            <person name="Deshazo D.R."/>
            <person name="Donlin J.E."/>
            <person name="D'Souza L."/>
            <person name="Eaves K.A."/>
            <person name="Egan A."/>
            <person name="Emery-Cohen A.J."/>
            <person name="Escotto M."/>
            <person name="Flagg N."/>
            <person name="Forbes L.D."/>
            <person name="Gabisi A.M."/>
            <person name="Garza M."/>
            <person name="Hamilton C."/>
            <person name="Henderson N."/>
            <person name="Hernandez O."/>
            <person name="Hines S."/>
            <person name="Hogues M.E."/>
            <person name="Huang M."/>
            <person name="Idlebird D.G."/>
            <person name="Johnson R."/>
            <person name="Jolivet A."/>
            <person name="Jones S."/>
            <person name="Kagan R."/>
            <person name="King L.M."/>
            <person name="Leal B."/>
            <person name="Lebow H."/>
            <person name="Lee S."/>
            <person name="LeVan J.M."/>
            <person name="Lewis L.C."/>
            <person name="London P."/>
            <person name="Lorensuhewa L.M."/>
            <person name="Loulseged H."/>
            <person name="Lovett D.A."/>
            <person name="Lucier A."/>
            <person name="Lucier R.L."/>
            <person name="Ma J."/>
            <person name="Madu R.C."/>
            <person name="Mapua P."/>
            <person name="Martindale A.D."/>
            <person name="Martinez E."/>
            <person name="Massey E."/>
            <person name="Mawhiney S."/>
            <person name="Meador M.G."/>
            <person name="Mendez S."/>
            <person name="Mercado C."/>
            <person name="Mercado I.C."/>
            <person name="Merritt C.E."/>
            <person name="Miner Z.L."/>
            <person name="Minja E."/>
            <person name="Mitchell T."/>
            <person name="Mohabbat F."/>
            <person name="Mohabbat K."/>
            <person name="Montgomery B."/>
            <person name="Moore N."/>
            <person name="Morris S."/>
            <person name="Munidasa M."/>
            <person name="Ngo R.N."/>
            <person name="Nguyen N.B."/>
            <person name="Nickerson E."/>
            <person name="Nwaokelemeh O.O."/>
            <person name="Nwokenkwo S."/>
            <person name="Obregon M."/>
            <person name="Oguh M."/>
            <person name="Oragunye N."/>
            <person name="Oviedo R.J."/>
            <person name="Parish B.J."/>
            <person name="Parker D.N."/>
            <person name="Parrish J."/>
            <person name="Parks K.L."/>
            <person name="Paul H.A."/>
            <person name="Payton B.A."/>
            <person name="Perez A."/>
            <person name="Perrin W."/>
            <person name="Pickens A."/>
            <person name="Primus E.L."/>
            <person name="Pu L.-L."/>
            <person name="Puazo M."/>
            <person name="Quiles M.M."/>
            <person name="Quiroz J.B."/>
            <person name="Rabata D."/>
            <person name="Reeves K."/>
            <person name="Ruiz S.J."/>
            <person name="Shao H."/>
            <person name="Sisson I."/>
            <person name="Sonaike T."/>
            <person name="Sorelle R.P."/>
            <person name="Sutton A.E."/>
            <person name="Svatek A.F."/>
            <person name="Svetz L.A."/>
            <person name="Tamerisa K.S."/>
            <person name="Taylor T.R."/>
            <person name="Teague B."/>
            <person name="Thomas N."/>
            <person name="Thorn R.D."/>
            <person name="Trejos Z.Y."/>
            <person name="Trevino B.K."/>
            <person name="Ukegbu O.N."/>
            <person name="Urban J.B."/>
            <person name="Vasquez L.I."/>
            <person name="Vera V.A."/>
            <person name="Villasana D.M."/>
            <person name="Wang L."/>
            <person name="Ward-Moore S."/>
            <person name="Warren J.T."/>
            <person name="Wei X."/>
            <person name="White F."/>
            <person name="Williamson A.L."/>
            <person name="Wleczyk R."/>
            <person name="Wooden H.S."/>
            <person name="Wooden S.H."/>
            <person name="Yen J."/>
            <person name="Yoon L."/>
            <person name="Yoon V."/>
            <person name="Zorrilla S.E."/>
            <person name="Nelson D."/>
            <person name="Kucherlapati R."/>
            <person name="Weinstock G."/>
            <person name="Gibbs R.A."/>
        </authorList>
    </citation>
    <scope>NUCLEOTIDE SEQUENCE [LARGE SCALE GENOMIC DNA]</scope>
</reference>
<reference key="4">
    <citation type="journal article" date="2004" name="Genome Res.">
        <title>The status, quality, and expansion of the NIH full-length cDNA project: the Mammalian Gene Collection (MGC).</title>
        <authorList>
            <consortium name="The MGC Project Team"/>
        </authorList>
    </citation>
    <scope>NUCLEOTIDE SEQUENCE [LARGE SCALE MRNA] (ISOFORM 1)</scope>
    <source>
        <tissue>Testis</tissue>
        <tissue>Uterus</tissue>
    </source>
</reference>
<reference key="5">
    <citation type="journal article" date="2004" name="J. Cell Biol.">
        <title>Cytoplasmic foci are sites of mRNA decay in human cells.</title>
        <authorList>
            <person name="Cougot N."/>
            <person name="Babajko S."/>
            <person name="Seraphin B."/>
        </authorList>
    </citation>
    <scope>SUBCELLULAR LOCATION</scope>
    <scope>INTERACTION WITH DCP1A</scope>
</reference>
<reference key="6">
    <citation type="journal article" date="2005" name="Nat. Biotechnol.">
        <title>Immunoaffinity profiling of tyrosine phosphorylation in cancer cells.</title>
        <authorList>
            <person name="Rush J."/>
            <person name="Moritz A."/>
            <person name="Lee K.A."/>
            <person name="Guo A."/>
            <person name="Goss V.L."/>
            <person name="Spek E.J."/>
            <person name="Zhang H."/>
            <person name="Zha X.-M."/>
            <person name="Polakiewicz R.D."/>
            <person name="Comb M.J."/>
        </authorList>
    </citation>
    <scope>PHOSPHORYLATION [LARGE SCALE ANALYSIS] AT TYR-191</scope>
    <scope>IDENTIFICATION BY MASS SPECTROMETRY [LARGE SCALE ANALYSIS]</scope>
</reference>
<reference key="7">
    <citation type="journal article" date="2009" name="Anal. Chem.">
        <title>Lys-N and trypsin cover complementary parts of the phosphoproteome in a refined SCX-based approach.</title>
        <authorList>
            <person name="Gauci S."/>
            <person name="Helbig A.O."/>
            <person name="Slijper M."/>
            <person name="Krijgsveld J."/>
            <person name="Heck A.J."/>
            <person name="Mohammed S."/>
        </authorList>
    </citation>
    <scope>ACETYLATION [LARGE SCALE ANALYSIS] AT ALA-2</scope>
    <scope>CLEAVAGE OF INITIATOR METHIONINE [LARGE SCALE ANALYSIS]</scope>
    <scope>IDENTIFICATION BY MASS SPECTROMETRY [LARGE SCALE ANALYSIS]</scope>
</reference>
<reference key="8">
    <citation type="journal article" date="2009" name="Sci. Signal.">
        <title>Quantitative phosphoproteomic analysis of T cell receptor signaling reveals system-wide modulation of protein-protein interactions.</title>
        <authorList>
            <person name="Mayya V."/>
            <person name="Lundgren D.H."/>
            <person name="Hwang S.-I."/>
            <person name="Rezaul K."/>
            <person name="Wu L."/>
            <person name="Eng J.K."/>
            <person name="Rodionov V."/>
            <person name="Han D.K."/>
        </authorList>
    </citation>
    <scope>PHOSPHORYLATION [LARGE SCALE ANALYSIS] AT SER-448 AND SER-511</scope>
    <scope>IDENTIFICATION BY MASS SPECTROMETRY [LARGE SCALE ANALYSIS]</scope>
    <source>
        <tissue>Leukemic T-cell</tissue>
    </source>
</reference>
<reference key="9">
    <citation type="journal article" date="2011" name="BMC Syst. Biol.">
        <title>Initial characterization of the human central proteome.</title>
        <authorList>
            <person name="Burkard T.R."/>
            <person name="Planyavsky M."/>
            <person name="Kaupe I."/>
            <person name="Breitwieser F.P."/>
            <person name="Buerckstuemmer T."/>
            <person name="Bennett K.L."/>
            <person name="Superti-Furga G."/>
            <person name="Colinge J."/>
        </authorList>
    </citation>
    <scope>IDENTIFICATION BY MASS SPECTROMETRY [LARGE SCALE ANALYSIS]</scope>
</reference>
<reference key="10">
    <citation type="journal article" date="2012" name="Mol. Cell. Proteomics">
        <title>Comparative large-scale characterisation of plant vs. mammal proteins reveals similar and idiosyncratic N-alpha acetylation features.</title>
        <authorList>
            <person name="Bienvenut W.V."/>
            <person name="Sumpton D."/>
            <person name="Martinez A."/>
            <person name="Lilla S."/>
            <person name="Espagne C."/>
            <person name="Meinnel T."/>
            <person name="Giglione C."/>
        </authorList>
    </citation>
    <scope>ACETYLATION [LARGE SCALE ANALYSIS] AT ALA-2</scope>
    <scope>CLEAVAGE OF INITIATOR METHIONINE [LARGE SCALE ANALYSIS]</scope>
    <scope>IDENTIFICATION BY MASS SPECTROMETRY [LARGE SCALE ANALYSIS]</scope>
</reference>
<reference key="11">
    <citation type="journal article" date="2012" name="Proc. Natl. Acad. Sci. U.S.A.">
        <title>N-terminal acetylome analyses and functional insights of the N-terminal acetyltransferase NatB.</title>
        <authorList>
            <person name="Van Damme P."/>
            <person name="Lasa M."/>
            <person name="Polevoda B."/>
            <person name="Gazquez C."/>
            <person name="Elosegui-Artola A."/>
            <person name="Kim D.S."/>
            <person name="De Juan-Pardo E."/>
            <person name="Demeyer K."/>
            <person name="Hole K."/>
            <person name="Larrea E."/>
            <person name="Timmerman E."/>
            <person name="Prieto J."/>
            <person name="Arnesen T."/>
            <person name="Sherman F."/>
            <person name="Gevaert K."/>
            <person name="Aldabe R."/>
        </authorList>
    </citation>
    <scope>ACETYLATION [LARGE SCALE ANALYSIS] AT ALA-2</scope>
    <scope>CLEAVAGE OF INITIATOR METHIONINE [LARGE SCALE ANALYSIS]</scope>
    <scope>IDENTIFICATION BY MASS SPECTROMETRY [LARGE SCALE ANALYSIS]</scope>
</reference>
<reference key="12">
    <citation type="journal article" date="2013" name="J. Proteome Res.">
        <title>Toward a comprehensive characterization of a human cancer cell phosphoproteome.</title>
        <authorList>
            <person name="Zhou H."/>
            <person name="Di Palma S."/>
            <person name="Preisinger C."/>
            <person name="Peng M."/>
            <person name="Polat A.N."/>
            <person name="Heck A.J."/>
            <person name="Mohammed S."/>
        </authorList>
    </citation>
    <scope>PHOSPHORYLATION [LARGE SCALE ANALYSIS] AT SER-147; SER-275; THR-392; SER-448 AND SER-511</scope>
    <scope>IDENTIFICATION BY MASS SPECTROMETRY [LARGE SCALE ANALYSIS]</scope>
    <source>
        <tissue>Cervix carcinoma</tissue>
        <tissue>Erythroleukemia</tissue>
    </source>
</reference>
<reference key="13">
    <citation type="journal article" date="2014" name="J. Proteomics">
        <title>An enzyme assisted RP-RPLC approach for in-depth analysis of human liver phosphoproteome.</title>
        <authorList>
            <person name="Bian Y."/>
            <person name="Song C."/>
            <person name="Cheng K."/>
            <person name="Dong M."/>
            <person name="Wang F."/>
            <person name="Huang J."/>
            <person name="Sun D."/>
            <person name="Wang L."/>
            <person name="Ye M."/>
            <person name="Zou H."/>
        </authorList>
    </citation>
    <scope>PHOSPHORYLATION [LARGE SCALE ANALYSIS] AT SER-336</scope>
    <scope>IDENTIFICATION BY MASS SPECTROMETRY [LARGE SCALE ANALYSIS]</scope>
    <source>
        <tissue>Liver</tissue>
    </source>
</reference>
<reference key="14">
    <citation type="journal article" date="2018" name="J. Virol.">
        <title>Rotavirus Induces Formation of Remodeled Stress Granules and P Bodies and Their Sequestration in Viroplasms To Promote Progeny Virus Production.</title>
        <authorList>
            <person name="Dhillon P."/>
            <person name="Rao C.D."/>
        </authorList>
    </citation>
    <scope>INTERACTION WITH ROTAVIRUS A NON-STRUCTURAL PROTEIN 2 (MICROBIAL INFECTION)</scope>
    <scope>INTERACTION WITH ROTAVIRUS A NON-STRUCTURAL PROTEIN 5 (MICROBIAL INFECTION)</scope>
</reference>
<name>DCP1B_HUMAN</name>
<sequence>MAAVAAGGLVGKGRDISLAALQRHDPYINRIVDVASQVALYTFGHRANEWEKTDVEGTLFVYTRSASPKHGFTIMNRLSMENRTEPITKDLDFQLQDPFLLYRNARLSIYGIWFYDKEECQRIAELMKNLTQYEQLKAHQGTGAGISPVILNSGEGKEVDILRMLIKAKDEYTKCKTCSEPKKITSSSAIYDNPNLIKPIPVKPSENQQQRIPQPNQTLDPEPQHLSLTALFGKQDKATCQETVEPPQTLHQQQQQQQQQQEKLPIRQGVVRSLSYEEPRRHSPPIEKQLCPAIQKLMVRSADLHPLSELPENRPCENGSTHSAGEFFTGPVQPGSPHNIGTSRGVQNASRTQNLFEKLQSTPGAANKCDPSTPAPASSAALNRSRAPTSVTPVAPGKGLAQPPQAYFNGSLPPQTVGHQAHGREQSTLPRQTLPISGSQTGSSGVISPQELLKKLQIVQQEQQLHASNRPALAAKFPVLAQSSGTGKPLESWINKTPNTEQQTPLFQVISPQRIPATAAPSLLMSPMVFAQPTSVPPKERESGLLPVGGQEPPAAATSLLLPIQSPEPSVITSSPLTKLQLQEALLYLIQNDDNFLNIIYEAYLFSMTQAAMKKTM</sequence>
<feature type="initiator methionine" description="Removed" evidence="9 11 12">
    <location>
        <position position="1"/>
    </location>
</feature>
<feature type="chain" id="PRO_0000402799" description="mRNA-decapping enzyme 1B">
    <location>
        <begin position="2"/>
        <end position="617"/>
    </location>
</feature>
<feature type="region of interest" description="Disordered" evidence="2">
    <location>
        <begin position="195"/>
        <end position="222"/>
    </location>
</feature>
<feature type="region of interest" description="Disordered" evidence="2">
    <location>
        <begin position="243"/>
        <end position="266"/>
    </location>
</feature>
<feature type="region of interest" description="Disordered" evidence="2">
    <location>
        <begin position="362"/>
        <end position="426"/>
    </location>
</feature>
<feature type="compositionally biased region" description="Polar residues" evidence="2">
    <location>
        <begin position="205"/>
        <end position="219"/>
    </location>
</feature>
<feature type="compositionally biased region" description="Low complexity" evidence="2">
    <location>
        <begin position="252"/>
        <end position="261"/>
    </location>
</feature>
<feature type="compositionally biased region" description="Low complexity" evidence="2">
    <location>
        <begin position="371"/>
        <end position="381"/>
    </location>
</feature>
<feature type="modified residue" description="N-acetylalanine" evidence="9 11 12">
    <location>
        <position position="2"/>
    </location>
</feature>
<feature type="modified residue" description="Phosphoserine" evidence="13">
    <location>
        <position position="147"/>
    </location>
</feature>
<feature type="modified residue" description="Phosphotyrosine" evidence="8">
    <location>
        <position position="191"/>
    </location>
</feature>
<feature type="modified residue" description="Phosphoserine" evidence="13">
    <location>
        <position position="275"/>
    </location>
</feature>
<feature type="modified residue" description="Phosphoserine" evidence="14">
    <location>
        <position position="336"/>
    </location>
</feature>
<feature type="modified residue" description="Phosphothreonine" evidence="13">
    <location>
        <position position="392"/>
    </location>
</feature>
<feature type="modified residue" description="Phosphoserine" evidence="10 13">
    <location>
        <position position="448"/>
    </location>
</feature>
<feature type="modified residue" description="Phosphoserine" evidence="10 13">
    <location>
        <position position="511"/>
    </location>
</feature>
<feature type="splice variant" id="VSP_056044" description="In isoform 2." evidence="6">
    <original>MAAVAAGGLVGKGRDISLAALQRHDPYINRIVDVASQVALYTFGHRANEWEKTDVEGTLFVYTRSASPKHGFTIMNRLSMENRTEPITKDLDFQLQDPFLLYRNARL</original>
    <variation>MQIKV</variation>
    <location>
        <begin position="1"/>
        <end position="107"/>
    </location>
</feature>
<feature type="sequence variant" id="VAR_047395" description="In dbSNP:rs12423058.">
    <original>N</original>
    <variation>D</variation>
    <location>
        <position position="195"/>
    </location>
</feature>
<feature type="sequence variant" id="VAR_047396" description="In dbSNP:rs34730825.">
    <original>N</original>
    <variation>S</variation>
    <location>
        <position position="216"/>
    </location>
</feature>
<feature type="sequence variant" id="VAR_047397" description="In dbSNP:rs2470449.">
    <original>S</original>
    <variation>T</variation>
    <location>
        <position position="301"/>
    </location>
</feature>
<feature type="sequence variant" id="VAR_047398" description="In dbSNP:rs715146.">
    <original>R</original>
    <variation>H</variation>
    <location>
        <position position="344"/>
    </location>
</feature>
<feature type="sequence conflict" description="In Ref. 1; AAN62764, 2; BAB71118 and 4; AAH15368/AAH43437." evidence="7" ref="1 2 4">
    <original>H</original>
    <variation>HQ</variation>
    <location>
        <position position="251"/>
    </location>
</feature>
<feature type="sequence conflict" description="In Ref. 2; BAB71118." evidence="7" ref="2">
    <original>Q</original>
    <variation>R</variation>
    <location>
        <position position="426"/>
    </location>
</feature>
<feature type="sequence conflict" description="In Ref. 4; AAH43437." evidence="7" ref="4">
    <original>P</original>
    <variation>A</variation>
    <location>
        <position position="435"/>
    </location>
</feature>
<accession>Q8IZD4</accession>
<accession>B4DRD1</accession>
<accession>Q86XH9</accession>
<accession>Q96BP8</accession>
<accession>Q96MZ8</accession>
<proteinExistence type="evidence at protein level"/>
<comment type="function">
    <text evidence="1">May play a role in the degradation of mRNAs, both in normal mRNA turnover and in nonsense-mediated mRNA decay. May remove the 7-methyl guanine cap structure from mRNA molecules, yielding a 5'-phosphorylated mRNA fragment and 7m-GDP (By similarity).</text>
</comment>
<comment type="catalytic activity">
    <reaction evidence="1">
        <text>a 5'-end (N(7)-methyl 5'-triphosphoguanosine)-ribonucleoside in mRNA + H2O = N(7)-methyl-GDP + a 5'-end phospho-ribonucleoside in mRNA + 2 H(+)</text>
        <dbReference type="Rhea" id="RHEA:67484"/>
        <dbReference type="Rhea" id="RHEA-COMP:15692"/>
        <dbReference type="Rhea" id="RHEA-COMP:17167"/>
        <dbReference type="ChEBI" id="CHEBI:15377"/>
        <dbReference type="ChEBI" id="CHEBI:15378"/>
        <dbReference type="ChEBI" id="CHEBI:63714"/>
        <dbReference type="ChEBI" id="CHEBI:138282"/>
        <dbReference type="ChEBI" id="CHEBI:156461"/>
        <dbReference type="EC" id="3.6.1.62"/>
    </reaction>
    <physiologicalReaction direction="left-to-right" evidence="1">
        <dbReference type="Rhea" id="RHEA:67485"/>
    </physiologicalReaction>
</comment>
<comment type="subunit">
    <text evidence="3 4">Interacts with DCP1A.</text>
</comment>
<comment type="subunit">
    <text evidence="5">(Microbial infection) Interacts with rotavirus A non-structural protein 2; this interaction probably plays a role in the sequestration of DCP1B in viral factories (PubMed:30258011). Interacts with rotavirus A non-structural protein 5; this interaction probably plays a role in its sequestration in viral factories (PubMed:30258011).</text>
</comment>
<comment type="interaction">
    <interactant intactId="EBI-521595">
        <id>Q8IZD4</id>
    </interactant>
    <interactant intactId="EBI-2949658">
        <id>O95429</id>
        <label>BAG4</label>
    </interactant>
    <organismsDiffer>false</organismsDiffer>
    <experiments>3</experiments>
</comment>
<comment type="interaction">
    <interactant intactId="EBI-521595">
        <id>Q8IZD4</id>
    </interactant>
    <interactant intactId="EBI-374238">
        <id>Q9NPI6</id>
        <label>DCP1A</label>
    </interactant>
    <organismsDiffer>false</organismsDiffer>
    <experiments>10</experiments>
</comment>
<comment type="interaction">
    <interactant intactId="EBI-521595">
        <id>Q8IZD4</id>
    </interactant>
    <interactant intactId="EBI-521577">
        <id>Q8IU60</id>
        <label>DCP2</label>
    </interactant>
    <organismsDiffer>false</organismsDiffer>
    <experiments>5</experiments>
</comment>
<comment type="interaction">
    <interactant intactId="EBI-521595">
        <id>Q8IZD4</id>
    </interactant>
    <interactant intactId="EBI-997311">
        <id>Q96F86</id>
        <label>EDC3</label>
    </interactant>
    <organismsDiffer>false</organismsDiffer>
    <experiments>14</experiments>
</comment>
<comment type="interaction">
    <interactant intactId="EBI-521595">
        <id>Q8IZD4</id>
    </interactant>
    <interactant intactId="EBI-2947053">
        <id>Q92636</id>
        <label>NSMAF</label>
    </interactant>
    <organismsDiffer>false</organismsDiffer>
    <experiments>2</experiments>
</comment>
<comment type="interaction">
    <interactant intactId="EBI-521595">
        <id>Q8IZD4</id>
    </interactant>
    <interactant intactId="EBI-2654794">
        <id>P55822</id>
        <label>SH3BGR</label>
    </interactant>
    <organismsDiffer>false</organismsDiffer>
    <experiments>2</experiments>
</comment>
<comment type="interaction">
    <interactant intactId="EBI-521595">
        <id>Q8IZD4</id>
    </interactant>
    <interactant intactId="EBI-3386960">
        <id>F4HZB2</id>
        <label>SPI</label>
    </interactant>
    <organismsDiffer>true</organismsDiffer>
    <experiments>2</experiments>
</comment>
<comment type="subcellular location">
    <subcellularLocation>
        <location evidence="4">Cytoplasm</location>
    </subcellularLocation>
    <subcellularLocation>
        <location evidence="1">Nucleus</location>
    </subcellularLocation>
</comment>
<comment type="alternative products">
    <event type="alternative splicing"/>
    <isoform>
        <id>Q8IZD4-1</id>
        <name>1</name>
        <sequence type="displayed"/>
    </isoform>
    <isoform>
        <id>Q8IZD4-2</id>
        <name>2</name>
        <sequence type="described" ref="VSP_056044"/>
    </isoform>
</comment>
<comment type="similarity">
    <text evidence="7">Belongs to the DCP1 family.</text>
</comment>
<evidence type="ECO:0000250" key="1">
    <source>
        <dbReference type="UniProtKB" id="Q9NPI6"/>
    </source>
</evidence>
<evidence type="ECO:0000256" key="2">
    <source>
        <dbReference type="SAM" id="MobiDB-lite"/>
    </source>
</evidence>
<evidence type="ECO:0000269" key="3">
    <source>
    </source>
</evidence>
<evidence type="ECO:0000269" key="4">
    <source>
    </source>
</evidence>
<evidence type="ECO:0000269" key="5">
    <source>
    </source>
</evidence>
<evidence type="ECO:0000303" key="6">
    <source>
    </source>
</evidence>
<evidence type="ECO:0000305" key="7"/>
<evidence type="ECO:0007744" key="8">
    <source>
    </source>
</evidence>
<evidence type="ECO:0007744" key="9">
    <source>
    </source>
</evidence>
<evidence type="ECO:0007744" key="10">
    <source>
    </source>
</evidence>
<evidence type="ECO:0007744" key="11">
    <source>
    </source>
</evidence>
<evidence type="ECO:0007744" key="12">
    <source>
    </source>
</evidence>
<evidence type="ECO:0007744" key="13">
    <source>
    </source>
</evidence>
<evidence type="ECO:0007744" key="14">
    <source>
    </source>
</evidence>
<gene>
    <name type="primary">DCP1B</name>
</gene>
<organism>
    <name type="scientific">Homo sapiens</name>
    <name type="common">Human</name>
    <dbReference type="NCBI Taxonomy" id="9606"/>
    <lineage>
        <taxon>Eukaryota</taxon>
        <taxon>Metazoa</taxon>
        <taxon>Chordata</taxon>
        <taxon>Craniata</taxon>
        <taxon>Vertebrata</taxon>
        <taxon>Euteleostomi</taxon>
        <taxon>Mammalia</taxon>
        <taxon>Eutheria</taxon>
        <taxon>Euarchontoglires</taxon>
        <taxon>Primates</taxon>
        <taxon>Haplorrhini</taxon>
        <taxon>Catarrhini</taxon>
        <taxon>Hominidae</taxon>
        <taxon>Homo</taxon>
    </lineage>
</organism>
<dbReference type="EC" id="3.6.1.62" evidence="1"/>
<dbReference type="EMBL" id="AY146652">
    <property type="protein sequence ID" value="AAN62764.1"/>
    <property type="molecule type" value="mRNA"/>
</dbReference>
<dbReference type="EMBL" id="AK056200">
    <property type="protein sequence ID" value="BAB71118.1"/>
    <property type="molecule type" value="mRNA"/>
</dbReference>
<dbReference type="EMBL" id="AK299203">
    <property type="protein sequence ID" value="BAG61243.1"/>
    <property type="molecule type" value="mRNA"/>
</dbReference>
<dbReference type="EMBL" id="AC005342">
    <property type="status" value="NOT_ANNOTATED_CDS"/>
    <property type="molecule type" value="Genomic_DNA"/>
</dbReference>
<dbReference type="EMBL" id="BC015368">
    <property type="protein sequence ID" value="AAH15368.3"/>
    <property type="molecule type" value="mRNA"/>
</dbReference>
<dbReference type="EMBL" id="BC043437">
    <property type="protein sequence ID" value="AAH43437.1"/>
    <property type="molecule type" value="mRNA"/>
</dbReference>
<dbReference type="CCDS" id="CCDS31727.1">
    <molecule id="Q8IZD4-1"/>
</dbReference>
<dbReference type="RefSeq" id="NP_689853.3">
    <molecule id="Q8IZD4-1"/>
    <property type="nucleotide sequence ID" value="NM_152640.4"/>
</dbReference>
<dbReference type="RefSeq" id="XP_011519229.1">
    <property type="nucleotide sequence ID" value="XM_011520927.2"/>
</dbReference>
<dbReference type="SMR" id="Q8IZD4"/>
<dbReference type="BioGRID" id="128216">
    <property type="interactions" value="113"/>
</dbReference>
<dbReference type="ComplexPortal" id="CPX-7341">
    <property type="entry name" value="RNA decapping and exonuclease complex, DCP1B variant"/>
</dbReference>
<dbReference type="DIP" id="DIP-31289N"/>
<dbReference type="FunCoup" id="Q8IZD4">
    <property type="interactions" value="2085"/>
</dbReference>
<dbReference type="IntAct" id="Q8IZD4">
    <property type="interactions" value="73"/>
</dbReference>
<dbReference type="MINT" id="Q8IZD4"/>
<dbReference type="STRING" id="9606.ENSP00000280665"/>
<dbReference type="GlyCosmos" id="Q8IZD4">
    <property type="glycosylation" value="3 sites, 2 glycans"/>
</dbReference>
<dbReference type="GlyGen" id="Q8IZD4">
    <property type="glycosylation" value="5 sites, 1 N-linked glycan (1 site), 2 O-linked glycans (3 sites)"/>
</dbReference>
<dbReference type="iPTMnet" id="Q8IZD4"/>
<dbReference type="PhosphoSitePlus" id="Q8IZD4"/>
<dbReference type="BioMuta" id="DCP1B"/>
<dbReference type="DMDM" id="317373353"/>
<dbReference type="jPOST" id="Q8IZD4"/>
<dbReference type="MassIVE" id="Q8IZD4"/>
<dbReference type="PaxDb" id="9606-ENSP00000280665"/>
<dbReference type="PeptideAtlas" id="Q8IZD4"/>
<dbReference type="ProteomicsDB" id="4941"/>
<dbReference type="ProteomicsDB" id="71329">
    <molecule id="Q8IZD4-1"/>
</dbReference>
<dbReference type="Pumba" id="Q8IZD4"/>
<dbReference type="Antibodypedia" id="22113">
    <property type="antibodies" value="178 antibodies from 26 providers"/>
</dbReference>
<dbReference type="DNASU" id="196513"/>
<dbReference type="Ensembl" id="ENST00000280665.11">
    <molecule id="Q8IZD4-1"/>
    <property type="protein sequence ID" value="ENSP00000280665.6"/>
    <property type="gene ID" value="ENSG00000151065.14"/>
</dbReference>
<dbReference type="Ensembl" id="ENST00000647122.2">
    <molecule id="Q8IZD4-1"/>
    <property type="protein sequence ID" value="ENSP00000494635.1"/>
    <property type="gene ID" value="ENSG00000284850.2"/>
</dbReference>
<dbReference type="GeneID" id="196513"/>
<dbReference type="KEGG" id="hsa:196513"/>
<dbReference type="MANE-Select" id="ENST00000280665.11">
    <property type="protein sequence ID" value="ENSP00000280665.6"/>
    <property type="RefSeq nucleotide sequence ID" value="NM_152640.5"/>
    <property type="RefSeq protein sequence ID" value="NP_689853.3"/>
</dbReference>
<dbReference type="UCSC" id="uc001qjx.2">
    <molecule id="Q8IZD4-1"/>
    <property type="organism name" value="human"/>
</dbReference>
<dbReference type="AGR" id="HGNC:24451"/>
<dbReference type="CTD" id="196513"/>
<dbReference type="DisGeNET" id="196513"/>
<dbReference type="GeneCards" id="DCP1B"/>
<dbReference type="HGNC" id="HGNC:24451">
    <property type="gene designation" value="DCP1B"/>
</dbReference>
<dbReference type="HPA" id="ENSG00000151065">
    <property type="expression patterns" value="Low tissue specificity"/>
</dbReference>
<dbReference type="MIM" id="609843">
    <property type="type" value="gene"/>
</dbReference>
<dbReference type="neXtProt" id="NX_Q8IZD4"/>
<dbReference type="OpenTargets" id="ENSG00000151065"/>
<dbReference type="PharmGKB" id="PA134889143"/>
<dbReference type="VEuPathDB" id="HostDB:ENSG00000151065"/>
<dbReference type="eggNOG" id="KOG2868">
    <property type="taxonomic scope" value="Eukaryota"/>
</dbReference>
<dbReference type="GeneTree" id="ENSGT00940000158409"/>
<dbReference type="HOGENOM" id="CLU_030030_2_0_1"/>
<dbReference type="InParanoid" id="Q8IZD4"/>
<dbReference type="OMA" id="IHPVGET"/>
<dbReference type="OrthoDB" id="440673at2759"/>
<dbReference type="PAN-GO" id="Q8IZD4">
    <property type="GO annotations" value="4 GO annotations based on evolutionary models"/>
</dbReference>
<dbReference type="PhylomeDB" id="Q8IZD4"/>
<dbReference type="TreeFam" id="TF320504"/>
<dbReference type="PathwayCommons" id="Q8IZD4"/>
<dbReference type="Reactome" id="R-HSA-430039">
    <property type="pathway name" value="mRNA decay by 5' to 3' exoribonuclease"/>
</dbReference>
<dbReference type="SignaLink" id="Q8IZD4"/>
<dbReference type="BioGRID-ORCS" id="196513">
    <property type="hits" value="15 hits in 1156 CRISPR screens"/>
</dbReference>
<dbReference type="CD-CODE" id="232F8A39">
    <property type="entry name" value="P-body"/>
</dbReference>
<dbReference type="CD-CODE" id="DEE660B4">
    <property type="entry name" value="Stress granule"/>
</dbReference>
<dbReference type="ChiTaRS" id="DCP1B">
    <property type="organism name" value="human"/>
</dbReference>
<dbReference type="GeneWiki" id="DCP1B"/>
<dbReference type="GenomeRNAi" id="196513"/>
<dbReference type="Pharos" id="Q8IZD4">
    <property type="development level" value="Tdark"/>
</dbReference>
<dbReference type="PRO" id="PR:Q8IZD4"/>
<dbReference type="Proteomes" id="UP000005640">
    <property type="component" value="Chromosome 12"/>
</dbReference>
<dbReference type="RNAct" id="Q8IZD4">
    <property type="molecule type" value="protein"/>
</dbReference>
<dbReference type="Bgee" id="ENSG00000151065">
    <property type="expression patterns" value="Expressed in muscle layer of sigmoid colon and 103 other cell types or tissues"/>
</dbReference>
<dbReference type="ExpressionAtlas" id="Q8IZD4">
    <property type="expression patterns" value="baseline and differential"/>
</dbReference>
<dbReference type="GO" id="GO:0005829">
    <property type="term" value="C:cytosol"/>
    <property type="evidence" value="ECO:0000314"/>
    <property type="project" value="HPA"/>
</dbReference>
<dbReference type="GO" id="GO:0043231">
    <property type="term" value="C:intracellular membrane-bounded organelle"/>
    <property type="evidence" value="ECO:0000314"/>
    <property type="project" value="HPA"/>
</dbReference>
<dbReference type="GO" id="GO:0016020">
    <property type="term" value="C:membrane"/>
    <property type="evidence" value="ECO:0007005"/>
    <property type="project" value="UniProtKB"/>
</dbReference>
<dbReference type="GO" id="GO:0005634">
    <property type="term" value="C:nucleus"/>
    <property type="evidence" value="ECO:0007669"/>
    <property type="project" value="UniProtKB-SubCell"/>
</dbReference>
<dbReference type="GO" id="GO:0000932">
    <property type="term" value="C:P-body"/>
    <property type="evidence" value="ECO:0000318"/>
    <property type="project" value="GO_Central"/>
</dbReference>
<dbReference type="GO" id="GO:0140933">
    <property type="term" value="F:5'-(N(7)-methylguanosine 5'-triphospho)-[mRNA] hydrolase activity"/>
    <property type="evidence" value="ECO:0007669"/>
    <property type="project" value="RHEA"/>
</dbReference>
<dbReference type="GO" id="GO:0008047">
    <property type="term" value="F:enzyme activator activity"/>
    <property type="evidence" value="ECO:0007669"/>
    <property type="project" value="InterPro"/>
</dbReference>
<dbReference type="GO" id="GO:0003729">
    <property type="term" value="F:mRNA binding"/>
    <property type="evidence" value="ECO:0000318"/>
    <property type="project" value="GO_Central"/>
</dbReference>
<dbReference type="GO" id="GO:0000290">
    <property type="term" value="P:deadenylation-dependent decapping of nuclear-transcribed mRNA"/>
    <property type="evidence" value="ECO:0000318"/>
    <property type="project" value="GO_Central"/>
</dbReference>
<dbReference type="GO" id="GO:0031087">
    <property type="term" value="P:deadenylation-independent decapping of nuclear-transcribed mRNA"/>
    <property type="evidence" value="ECO:0000318"/>
    <property type="project" value="GO_Central"/>
</dbReference>
<dbReference type="GO" id="GO:0000184">
    <property type="term" value="P:nuclear-transcribed mRNA catabolic process, nonsense-mediated decay"/>
    <property type="evidence" value="ECO:0007669"/>
    <property type="project" value="UniProtKB-KW"/>
</dbReference>
<dbReference type="CDD" id="cd09804">
    <property type="entry name" value="Dcp1"/>
    <property type="match status" value="1"/>
</dbReference>
<dbReference type="FunFam" id="2.30.29.30:FF:000097">
    <property type="entry name" value="Putative mRNA-decapping enzyme 1A"/>
    <property type="match status" value="1"/>
</dbReference>
<dbReference type="Gene3D" id="6.10.140.2030">
    <property type="match status" value="1"/>
</dbReference>
<dbReference type="Gene3D" id="2.30.29.30">
    <property type="entry name" value="Pleckstrin-homology domain (PH domain)/Phosphotyrosine-binding domain (PTB)"/>
    <property type="match status" value="1"/>
</dbReference>
<dbReference type="InterPro" id="IPR010334">
    <property type="entry name" value="Dcp1"/>
</dbReference>
<dbReference type="InterPro" id="IPR031953">
    <property type="entry name" value="mRNA_decap_C"/>
</dbReference>
<dbReference type="InterPro" id="IPR011993">
    <property type="entry name" value="PH-like_dom_sf"/>
</dbReference>
<dbReference type="PANTHER" id="PTHR16290:SF5">
    <property type="entry name" value="MRNA-DECAPPING ENZYME 1B"/>
    <property type="match status" value="1"/>
</dbReference>
<dbReference type="PANTHER" id="PTHR16290">
    <property type="entry name" value="TRANSCRIPTION FACTOR SMIF DECAPPING ENZYME DCP1"/>
    <property type="match status" value="1"/>
</dbReference>
<dbReference type="Pfam" id="PF06058">
    <property type="entry name" value="DCP1"/>
    <property type="match status" value="1"/>
</dbReference>
<dbReference type="Pfam" id="PF16741">
    <property type="entry name" value="mRNA_decap_C"/>
    <property type="match status" value="1"/>
</dbReference>
<dbReference type="SUPFAM" id="SSF50729">
    <property type="entry name" value="PH domain-like"/>
    <property type="match status" value="1"/>
</dbReference>